<sequence length="238" mass="25374">MKRRLLAAGCAMLLLSGCNAARQQPSPVPPVTQPQAYAEPEDTAANPGSLYSESDSEFLFSDNRARRVGDIVLVKVVETDKAKNKADTTADKTSTNELGVSAFFGQSSASINPINPAGPFSGAVGANPILGTSSTSKHSATGETKRESTVTTTIAARVLRVLPGGLMEVEGARETRVNDETQYIVVSGLVRARDVSSDNSVTSSQMANARIEYYGKGTLADKQKPGWFTRLMDNVWPF</sequence>
<comment type="function">
    <text evidence="1">Assembles around the rod to form the L-ring and probably protects the motor/basal body from shearing forces during rotation.</text>
</comment>
<comment type="subunit">
    <text evidence="1">The basal body constitutes a major portion of the flagellar organelle and consists of four rings (L,P,S, and M) mounted on a central rod.</text>
</comment>
<comment type="subcellular location">
    <subcellularLocation>
        <location evidence="1">Cell outer membrane</location>
        <topology evidence="1">Lipid-anchor</topology>
    </subcellularLocation>
    <subcellularLocation>
        <location evidence="1">Bacterial flagellum basal body</location>
    </subcellularLocation>
</comment>
<comment type="similarity">
    <text evidence="1">Belongs to the FlgH family.</text>
</comment>
<gene>
    <name evidence="1" type="primary">flgH</name>
    <name type="ordered locus">DvMF_2520</name>
</gene>
<keyword id="KW-0975">Bacterial flagellum</keyword>
<keyword id="KW-0998">Cell outer membrane</keyword>
<keyword id="KW-0449">Lipoprotein</keyword>
<keyword id="KW-0472">Membrane</keyword>
<keyword id="KW-0564">Palmitate</keyword>
<keyword id="KW-0732">Signal</keyword>
<dbReference type="EMBL" id="CP001197">
    <property type="protein sequence ID" value="ACL09459.1"/>
    <property type="molecule type" value="Genomic_DNA"/>
</dbReference>
<dbReference type="SMR" id="B8DQY1"/>
<dbReference type="STRING" id="883.DvMF_2520"/>
<dbReference type="KEGG" id="dvm:DvMF_2520"/>
<dbReference type="eggNOG" id="COG2063">
    <property type="taxonomic scope" value="Bacteria"/>
</dbReference>
<dbReference type="HOGENOM" id="CLU_069313_1_1_7"/>
<dbReference type="OrthoDB" id="9789227at2"/>
<dbReference type="GO" id="GO:0009427">
    <property type="term" value="C:bacterial-type flagellum basal body, distal rod, L ring"/>
    <property type="evidence" value="ECO:0007669"/>
    <property type="project" value="InterPro"/>
</dbReference>
<dbReference type="GO" id="GO:0009279">
    <property type="term" value="C:cell outer membrane"/>
    <property type="evidence" value="ECO:0007669"/>
    <property type="project" value="UniProtKB-SubCell"/>
</dbReference>
<dbReference type="GO" id="GO:0003774">
    <property type="term" value="F:cytoskeletal motor activity"/>
    <property type="evidence" value="ECO:0007669"/>
    <property type="project" value="InterPro"/>
</dbReference>
<dbReference type="GO" id="GO:0071973">
    <property type="term" value="P:bacterial-type flagellum-dependent cell motility"/>
    <property type="evidence" value="ECO:0007669"/>
    <property type="project" value="InterPro"/>
</dbReference>
<dbReference type="HAMAP" id="MF_00415">
    <property type="entry name" value="FlgH"/>
    <property type="match status" value="1"/>
</dbReference>
<dbReference type="InterPro" id="IPR000527">
    <property type="entry name" value="Flag_Lring"/>
</dbReference>
<dbReference type="NCBIfam" id="NF009336">
    <property type="entry name" value="PRK12696.1"/>
    <property type="match status" value="1"/>
</dbReference>
<dbReference type="PANTHER" id="PTHR34933">
    <property type="entry name" value="FLAGELLAR L-RING PROTEIN"/>
    <property type="match status" value="1"/>
</dbReference>
<dbReference type="PANTHER" id="PTHR34933:SF1">
    <property type="entry name" value="FLAGELLAR L-RING PROTEIN"/>
    <property type="match status" value="1"/>
</dbReference>
<dbReference type="Pfam" id="PF02107">
    <property type="entry name" value="FlgH"/>
    <property type="match status" value="1"/>
</dbReference>
<dbReference type="PRINTS" id="PR01008">
    <property type="entry name" value="FLGLRINGFLGH"/>
</dbReference>
<dbReference type="PROSITE" id="PS51257">
    <property type="entry name" value="PROKAR_LIPOPROTEIN"/>
    <property type="match status" value="1"/>
</dbReference>
<accession>B8DQY1</accession>
<evidence type="ECO:0000255" key="1">
    <source>
        <dbReference type="HAMAP-Rule" id="MF_00415"/>
    </source>
</evidence>
<evidence type="ECO:0000256" key="2">
    <source>
        <dbReference type="SAM" id="MobiDB-lite"/>
    </source>
</evidence>
<protein>
    <recommendedName>
        <fullName evidence="1">Flagellar L-ring protein</fullName>
    </recommendedName>
    <alternativeName>
        <fullName evidence="1">Basal body L-ring protein</fullName>
    </alternativeName>
</protein>
<name>FLGH_NITV9</name>
<reference key="1">
    <citation type="submission" date="2008-10" db="EMBL/GenBank/DDBJ databases">
        <title>Complete sequence of Desulfovibrio vulgaris str. 'Miyazaki F'.</title>
        <authorList>
            <person name="Lucas S."/>
            <person name="Copeland A."/>
            <person name="Lapidus A."/>
            <person name="Glavina del Rio T."/>
            <person name="Dalin E."/>
            <person name="Tice H."/>
            <person name="Bruce D."/>
            <person name="Goodwin L."/>
            <person name="Pitluck S."/>
            <person name="Sims D."/>
            <person name="Brettin T."/>
            <person name="Detter J.C."/>
            <person name="Han C."/>
            <person name="Larimer F."/>
            <person name="Land M."/>
            <person name="Hauser L."/>
            <person name="Kyrpides N."/>
            <person name="Mikhailova N."/>
            <person name="Hazen T.C."/>
            <person name="Richardson P."/>
        </authorList>
    </citation>
    <scope>NUCLEOTIDE SEQUENCE [LARGE SCALE GENOMIC DNA]</scope>
    <source>
        <strain>DSM 19637 / Miyazaki F</strain>
    </source>
</reference>
<feature type="signal peptide" evidence="1">
    <location>
        <begin position="1"/>
        <end position="17"/>
    </location>
</feature>
<feature type="chain" id="PRO_1000123943" description="Flagellar L-ring protein">
    <location>
        <begin position="18"/>
        <end position="238"/>
    </location>
</feature>
<feature type="region of interest" description="Disordered" evidence="2">
    <location>
        <begin position="22"/>
        <end position="50"/>
    </location>
</feature>
<feature type="lipid moiety-binding region" description="N-palmitoyl cysteine" evidence="1">
    <location>
        <position position="18"/>
    </location>
</feature>
<feature type="lipid moiety-binding region" description="S-diacylglycerol cysteine" evidence="1">
    <location>
        <position position="18"/>
    </location>
</feature>
<proteinExistence type="inferred from homology"/>
<organism>
    <name type="scientific">Nitratidesulfovibrio vulgaris (strain DSM 19637 / Miyazaki F)</name>
    <name type="common">Desulfovibrio vulgaris</name>
    <dbReference type="NCBI Taxonomy" id="883"/>
    <lineage>
        <taxon>Bacteria</taxon>
        <taxon>Pseudomonadati</taxon>
        <taxon>Thermodesulfobacteriota</taxon>
        <taxon>Desulfovibrionia</taxon>
        <taxon>Desulfovibrionales</taxon>
        <taxon>Desulfovibrionaceae</taxon>
        <taxon>Nitratidesulfovibrio</taxon>
    </lineage>
</organism>